<reference key="1">
    <citation type="submission" date="2003-12" db="EMBL/GenBank/DDBJ databases">
        <authorList>
            <person name="Wang X."/>
            <person name="Jing N."/>
        </authorList>
    </citation>
    <scope>NUCLEOTIDE SEQUENCE [MRNA]</scope>
</reference>
<reference key="2">
    <citation type="journal article" date="2004" name="Genome Res.">
        <title>The status, quality, and expansion of the NIH full-length cDNA project: the Mammalian Gene Collection (MGC).</title>
        <authorList>
            <consortium name="The MGC Project Team"/>
        </authorList>
    </citation>
    <scope>NUCLEOTIDE SEQUENCE [LARGE SCALE MRNA]</scope>
    <source>
        <tissue>Kidney</tissue>
    </source>
</reference>
<reference key="3">
    <citation type="submission" date="2007-04" db="UniProtKB">
        <authorList>
            <person name="Lubec G."/>
            <person name="Afjehi-Sadat L."/>
            <person name="Chen W.-Q."/>
        </authorList>
    </citation>
    <scope>PROTEIN SEQUENCE OF 133-148; 213-234 AND 328-341</scope>
    <scope>IDENTIFICATION BY MASS SPECTROMETRY</scope>
    <source>
        <strain>Sprague-Dawley</strain>
        <tissue>Hippocampus</tissue>
        <tissue>Spinal cord</tissue>
    </source>
</reference>
<reference key="4">
    <citation type="journal article" date="2012" name="Nat. Commun.">
        <title>Quantitative maps of protein phosphorylation sites across 14 different rat organs and tissues.</title>
        <authorList>
            <person name="Lundby A."/>
            <person name="Secher A."/>
            <person name="Lage K."/>
            <person name="Nordsborg N.B."/>
            <person name="Dmytriyev A."/>
            <person name="Lundby C."/>
            <person name="Olsen J.V."/>
        </authorList>
    </citation>
    <scope>PHOSPHORYLATION [LARGE SCALE ANALYSIS] AT SER-2; SER-326; THR-328; SER-330; SER-333; SER-336; THR-346; SER-352; SER-362; THR-366 AND THR-375</scope>
    <scope>IDENTIFICATION BY MASS SPECTROMETRY [LARGE SCALE ANALYSIS]</scope>
</reference>
<comment type="function">
    <text evidence="1">Stress-responsive protein involved in hormone responses, cell growth, and differentiation. Acts as a tumor suppressor in many cell types. Necessary but not sufficient for p53/TP53-mediated caspase activation and apoptosis. Has a role in cell trafficking notably of the Schwann cell and is necessary for the maintenance and development of the peripheral nerve myelin sheath. Required for vesicular recycling of CDH1 and TF. May also function in lipid trafficking. Protects cells from spindle disruption damage. Functions in p53/TP53-dependent mitotic spindle checkpoint. Regulates microtubule dynamics and maintains euploidy (By similarity).</text>
</comment>
<comment type="subunit">
    <text evidence="1">Interacts with RAB4A (membrane-bound form); the interaction involves NDRG1 in vesicular recycling of CDH1. Interacts with APOA1, APOA2, PRA1 and RTN1 (By similarity).</text>
</comment>
<comment type="subcellular location">
    <subcellularLocation>
        <location evidence="1">Cytoplasm</location>
        <location evidence="1">Cytosol</location>
    </subcellularLocation>
    <subcellularLocation>
        <location evidence="1">Cytoplasm</location>
        <location evidence="1">Cytoskeleton</location>
        <location evidence="1">Microtubule organizing center</location>
        <location evidence="1">Centrosome</location>
    </subcellularLocation>
    <subcellularLocation>
        <location evidence="1">Nucleus</location>
    </subcellularLocation>
    <subcellularLocation>
        <location evidence="1">Cell membrane</location>
    </subcellularLocation>
    <text evidence="1">Mainly cytoplasmic but differentially localized to other regions. Associates with the plasma membrane in intestinal epithelia and lactating mammary gland. Translocated to the nucleus in a p53/TP53-dependent manner. In prostate epithelium and placental chorion, located in both the cytoplasm and in the nucleus. No nuclear localization in colon epithelium cells. In intestinal mucosa, prostate and renal cortex, located predominantly adjacent to adherens junctions. Cytoplasmic with granular staining in proximal tubular cells of the kidney and salivary gland ducts. Recruits to the membrane of recycling/sorting and late endosomes via binding to phosphatidylinositol 4-phosphate. Associates with microtubules. Colocalizes with TUBG1 in the centrosome. Cytoplasmic location increased with hypoxia. Phosphorylated form found associated with centromeres during S-phase of mitosis and with the plasma membrane (By similarity).</text>
</comment>
<comment type="PTM">
    <text evidence="1">Under stress conditions, phosphorylated in the C-terminal on many serine and threonine residues. Phosphorylated in vitro by PKA. Phosphorylation enhanced by increased intracellular cAMP levels. Homocysteine induces dephosphorylation. Phosphorylation by SGK1 is cell cycle dependent (By similarity).</text>
</comment>
<comment type="similarity">
    <text evidence="5">Belongs to the NDRG family.</text>
</comment>
<proteinExistence type="evidence at protein level"/>
<evidence type="ECO:0000250" key="1"/>
<evidence type="ECO:0000250" key="2">
    <source>
        <dbReference type="UniProtKB" id="Q62433"/>
    </source>
</evidence>
<evidence type="ECO:0000250" key="3">
    <source>
        <dbReference type="UniProtKB" id="Q92597"/>
    </source>
</evidence>
<evidence type="ECO:0000256" key="4">
    <source>
        <dbReference type="SAM" id="MobiDB-lite"/>
    </source>
</evidence>
<evidence type="ECO:0000305" key="5"/>
<evidence type="ECO:0007744" key="6">
    <source>
    </source>
</evidence>
<keyword id="KW-0007">Acetylation</keyword>
<keyword id="KW-1003">Cell membrane</keyword>
<keyword id="KW-0963">Cytoplasm</keyword>
<keyword id="KW-0206">Cytoskeleton</keyword>
<keyword id="KW-0903">Direct protein sequencing</keyword>
<keyword id="KW-0472">Membrane</keyword>
<keyword id="KW-0493">Microtubule</keyword>
<keyword id="KW-0539">Nucleus</keyword>
<keyword id="KW-0597">Phosphoprotein</keyword>
<keyword id="KW-1185">Reference proteome</keyword>
<keyword id="KW-0677">Repeat</keyword>
<sequence>MSRELHDVDLAEVKPLVEKGESITGLLQEFDVQEQDIETLHGSLHVTLCGTPKGNRPVILTYHDIGMNHKTCYNPLFNSEDMQEITQHFAVCHVDAPGQQDGAPSFPVGYMYPSMDQLAEMLPGVLHKFGLKSVIGMGTGAGAYILTRFALNNPEMVEGLVLMNVNPCAEGWMDWAASKISGWTQALPDMVVSHLFGKEEIHSNVEVVHTYRQHILNDMNPSNLHLFISAYNSRRDLEIERPMPGTHTVTLQCPALLVVGDNSPAVDAVVECNSKLDPTKTTLLKMADCGGLPQISQPAKLAEAFKYFVQGMGYMPSASMTRLMRSRTASGSSVTSLEGTRSRSHTSEGPRSRSHTSEGSRSRSHTSEDARLNITPSSGATGNNAGPKSMEVSC</sequence>
<feature type="initiator methionine" description="Removed" evidence="3">
    <location>
        <position position="1"/>
    </location>
</feature>
<feature type="chain" id="PRO_0000270758" description="Protein NDRG1">
    <location>
        <begin position="2"/>
        <end position="394"/>
    </location>
</feature>
<feature type="repeat" description="1">
    <location>
        <begin position="339"/>
        <end position="348"/>
    </location>
</feature>
<feature type="repeat" description="2">
    <location>
        <begin position="349"/>
        <end position="358"/>
    </location>
</feature>
<feature type="repeat" description="3">
    <location>
        <begin position="359"/>
        <end position="368"/>
    </location>
</feature>
<feature type="region of interest" description="Disordered" evidence="4">
    <location>
        <begin position="325"/>
        <end position="394"/>
    </location>
</feature>
<feature type="region of interest" description="3 X 10 AA tandem repeats of G-[PST]-R-S-R-S-H-T-S-E">
    <location>
        <begin position="339"/>
        <end position="368"/>
    </location>
</feature>
<feature type="compositionally biased region" description="Polar residues" evidence="4">
    <location>
        <begin position="327"/>
        <end position="339"/>
    </location>
</feature>
<feature type="compositionally biased region" description="Basic and acidic residues" evidence="4">
    <location>
        <begin position="345"/>
        <end position="371"/>
    </location>
</feature>
<feature type="compositionally biased region" description="Polar residues" evidence="4">
    <location>
        <begin position="374"/>
        <end position="386"/>
    </location>
</feature>
<feature type="modified residue" description="N-acetylserine" evidence="3">
    <location>
        <position position="2"/>
    </location>
</feature>
<feature type="modified residue" description="Phosphoserine" evidence="6">
    <location>
        <position position="2"/>
    </location>
</feature>
<feature type="modified residue" description="Phosphoserine" evidence="2">
    <location>
        <position position="319"/>
    </location>
</feature>
<feature type="modified residue" description="Phosphoserine" evidence="6">
    <location>
        <position position="326"/>
    </location>
</feature>
<feature type="modified residue" description="Phosphothreonine" evidence="6">
    <location>
        <position position="328"/>
    </location>
</feature>
<feature type="modified residue" description="Phosphoserine" evidence="6">
    <location>
        <position position="330"/>
    </location>
</feature>
<feature type="modified residue" description="Phosphoserine; by SGK1" evidence="3">
    <location>
        <position position="332"/>
    </location>
</feature>
<feature type="modified residue" description="Phosphoserine" evidence="6">
    <location>
        <position position="333"/>
    </location>
</feature>
<feature type="modified residue" description="Phosphothreonine" evidence="2">
    <location>
        <position position="335"/>
    </location>
</feature>
<feature type="modified residue" description="Phosphoserine" evidence="6">
    <location>
        <position position="336"/>
    </location>
</feature>
<feature type="modified residue" description="Phosphothreonine" evidence="2">
    <location>
        <position position="340"/>
    </location>
</feature>
<feature type="modified residue" description="Phosphoserine" evidence="2">
    <location>
        <position position="342"/>
    </location>
</feature>
<feature type="modified residue" description="Phosphothreonine" evidence="6">
    <location>
        <position position="346"/>
    </location>
</feature>
<feature type="modified residue" description="Phosphoserine" evidence="6">
    <location>
        <position position="352"/>
    </location>
</feature>
<feature type="modified residue" description="Phosphothreonine; by SGK1" evidence="3">
    <location>
        <position position="356"/>
    </location>
</feature>
<feature type="modified residue" description="Phosphoserine" evidence="6">
    <location>
        <position position="362"/>
    </location>
</feature>
<feature type="modified residue" description="Phosphoserine" evidence="3">
    <location>
        <position position="364"/>
    </location>
</feature>
<feature type="modified residue" description="Phosphothreonine" evidence="6">
    <location>
        <position position="366"/>
    </location>
</feature>
<feature type="modified residue" description="Phosphothreonine" evidence="6">
    <location>
        <position position="375"/>
    </location>
</feature>
<gene>
    <name type="primary">Ndrg1</name>
    <name type="synonym">Ndr1</name>
</gene>
<accession>Q6JE36</accession>
<name>NDRG1_RAT</name>
<organism>
    <name type="scientific">Rattus norvegicus</name>
    <name type="common">Rat</name>
    <dbReference type="NCBI Taxonomy" id="10116"/>
    <lineage>
        <taxon>Eukaryota</taxon>
        <taxon>Metazoa</taxon>
        <taxon>Chordata</taxon>
        <taxon>Craniata</taxon>
        <taxon>Vertebrata</taxon>
        <taxon>Euteleostomi</taxon>
        <taxon>Mammalia</taxon>
        <taxon>Eutheria</taxon>
        <taxon>Euarchontoglires</taxon>
        <taxon>Glires</taxon>
        <taxon>Rodentia</taxon>
        <taxon>Myomorpha</taxon>
        <taxon>Muroidea</taxon>
        <taxon>Muridae</taxon>
        <taxon>Murinae</taxon>
        <taxon>Rattus</taxon>
    </lineage>
</organism>
<protein>
    <recommendedName>
        <fullName>Protein NDRG1</fullName>
    </recommendedName>
    <alternativeName>
        <fullName>N-myc downstream-regulated gene 1 protein</fullName>
        <shortName>Protein Ndr1</shortName>
    </alternativeName>
</protein>
<dbReference type="EMBL" id="AY500369">
    <property type="protein sequence ID" value="AAS78638.1"/>
    <property type="molecule type" value="mRNA"/>
</dbReference>
<dbReference type="EMBL" id="BC081898">
    <property type="protein sequence ID" value="AAH81898.1"/>
    <property type="molecule type" value="mRNA"/>
</dbReference>
<dbReference type="RefSeq" id="NP_001011991.1">
    <property type="nucleotide sequence ID" value="NM_001011991.1"/>
</dbReference>
<dbReference type="SMR" id="Q6JE36"/>
<dbReference type="BioGRID" id="256379">
    <property type="interactions" value="1"/>
</dbReference>
<dbReference type="FunCoup" id="Q6JE36">
    <property type="interactions" value="1916"/>
</dbReference>
<dbReference type="STRING" id="10116.ENSRNOP00000010811"/>
<dbReference type="ESTHER" id="ratno-q6je36">
    <property type="family name" value="Ndr_family"/>
</dbReference>
<dbReference type="MEROPS" id="S33.988"/>
<dbReference type="iPTMnet" id="Q6JE36"/>
<dbReference type="PhosphoSitePlus" id="Q6JE36"/>
<dbReference type="PaxDb" id="10116-ENSRNOP00000010811"/>
<dbReference type="Ensembl" id="ENSRNOT00000010811.8">
    <property type="protein sequence ID" value="ENSRNOP00000010811.5"/>
    <property type="gene ID" value="ENSRNOG00000007393.8"/>
</dbReference>
<dbReference type="GeneID" id="299923"/>
<dbReference type="KEGG" id="rno:299923"/>
<dbReference type="UCSC" id="RGD:1307303">
    <property type="organism name" value="rat"/>
</dbReference>
<dbReference type="AGR" id="RGD:1307303"/>
<dbReference type="CTD" id="10397"/>
<dbReference type="RGD" id="1307303">
    <property type="gene designation" value="Ndrg1"/>
</dbReference>
<dbReference type="eggNOG" id="KOG2931">
    <property type="taxonomic scope" value="Eukaryota"/>
</dbReference>
<dbReference type="GeneTree" id="ENSGT00950000182872"/>
<dbReference type="HOGENOM" id="CLU_035361_1_0_1"/>
<dbReference type="InParanoid" id="Q6JE36"/>
<dbReference type="OMA" id="LVEKGEX"/>
<dbReference type="PhylomeDB" id="Q6JE36"/>
<dbReference type="TreeFam" id="TF313168"/>
<dbReference type="PRO" id="PR:Q6JE36"/>
<dbReference type="Proteomes" id="UP000002494">
    <property type="component" value="Chromosome 7"/>
</dbReference>
<dbReference type="Bgee" id="ENSRNOG00000007393">
    <property type="expression patterns" value="Expressed in adult mammalian kidney and 19 other cell types or tissues"/>
</dbReference>
<dbReference type="ExpressionAtlas" id="Q6JE36">
    <property type="expression patterns" value="baseline and differential"/>
</dbReference>
<dbReference type="GO" id="GO:0005912">
    <property type="term" value="C:adherens junction"/>
    <property type="evidence" value="ECO:0000266"/>
    <property type="project" value="RGD"/>
</dbReference>
<dbReference type="GO" id="GO:0005813">
    <property type="term" value="C:centrosome"/>
    <property type="evidence" value="ECO:0000266"/>
    <property type="project" value="RGD"/>
</dbReference>
<dbReference type="GO" id="GO:0005737">
    <property type="term" value="C:cytoplasm"/>
    <property type="evidence" value="ECO:0000266"/>
    <property type="project" value="RGD"/>
</dbReference>
<dbReference type="GO" id="GO:0005829">
    <property type="term" value="C:cytosol"/>
    <property type="evidence" value="ECO:0007669"/>
    <property type="project" value="UniProtKB-SubCell"/>
</dbReference>
<dbReference type="GO" id="GO:0005874">
    <property type="term" value="C:microtubule"/>
    <property type="evidence" value="ECO:0000266"/>
    <property type="project" value="RGD"/>
</dbReference>
<dbReference type="GO" id="GO:0005634">
    <property type="term" value="C:nucleus"/>
    <property type="evidence" value="ECO:0000266"/>
    <property type="project" value="RGD"/>
</dbReference>
<dbReference type="GO" id="GO:0048471">
    <property type="term" value="C:perinuclear region of cytoplasm"/>
    <property type="evidence" value="ECO:0000266"/>
    <property type="project" value="RGD"/>
</dbReference>
<dbReference type="GO" id="GO:0005886">
    <property type="term" value="C:plasma membrane"/>
    <property type="evidence" value="ECO:0000266"/>
    <property type="project" value="RGD"/>
</dbReference>
<dbReference type="GO" id="GO:0055038">
    <property type="term" value="C:recycling endosome membrane"/>
    <property type="evidence" value="ECO:0000266"/>
    <property type="project" value="RGD"/>
</dbReference>
<dbReference type="GO" id="GO:0045296">
    <property type="term" value="F:cadherin binding"/>
    <property type="evidence" value="ECO:0000266"/>
    <property type="project" value="RGD"/>
</dbReference>
<dbReference type="GO" id="GO:0043015">
    <property type="term" value="F:gamma-tubulin binding"/>
    <property type="evidence" value="ECO:0000266"/>
    <property type="project" value="RGD"/>
</dbReference>
<dbReference type="GO" id="GO:0008017">
    <property type="term" value="F:microtubule binding"/>
    <property type="evidence" value="ECO:0000266"/>
    <property type="project" value="RGD"/>
</dbReference>
<dbReference type="GO" id="GO:0016151">
    <property type="term" value="F:nickel cation binding"/>
    <property type="evidence" value="ECO:0000266"/>
    <property type="project" value="RGD"/>
</dbReference>
<dbReference type="GO" id="GO:0031267">
    <property type="term" value="F:small GTPase binding"/>
    <property type="evidence" value="ECO:0000266"/>
    <property type="project" value="RGD"/>
</dbReference>
<dbReference type="GO" id="GO:0071456">
    <property type="term" value="P:cellular response to hypoxia"/>
    <property type="evidence" value="ECO:0000266"/>
    <property type="project" value="RGD"/>
</dbReference>
<dbReference type="GO" id="GO:0030330">
    <property type="term" value="P:DNA damage response, signal transduction by p53 class mediator"/>
    <property type="evidence" value="ECO:0000266"/>
    <property type="project" value="RGD"/>
</dbReference>
<dbReference type="GO" id="GO:0045576">
    <property type="term" value="P:mast cell activation"/>
    <property type="evidence" value="ECO:0000266"/>
    <property type="project" value="RGD"/>
</dbReference>
<dbReference type="GO" id="GO:0008285">
    <property type="term" value="P:negative regulation of cell population proliferation"/>
    <property type="evidence" value="ECO:0000266"/>
    <property type="project" value="RGD"/>
</dbReference>
<dbReference type="GO" id="GO:0032287">
    <property type="term" value="P:peripheral nervous system myelin maintenance"/>
    <property type="evidence" value="ECO:0000266"/>
    <property type="project" value="RGD"/>
</dbReference>
<dbReference type="GO" id="GO:0007165">
    <property type="term" value="P:signal transduction"/>
    <property type="evidence" value="ECO:0000318"/>
    <property type="project" value="GO_Central"/>
</dbReference>
<dbReference type="FunFam" id="3.40.50.1820:FF:000006">
    <property type="entry name" value="NDRG family member 3"/>
    <property type="match status" value="1"/>
</dbReference>
<dbReference type="Gene3D" id="3.40.50.1820">
    <property type="entry name" value="alpha/beta hydrolase"/>
    <property type="match status" value="1"/>
</dbReference>
<dbReference type="InterPro" id="IPR029058">
    <property type="entry name" value="AB_hydrolase_fold"/>
</dbReference>
<dbReference type="InterPro" id="IPR004142">
    <property type="entry name" value="NDRG"/>
</dbReference>
<dbReference type="PANTHER" id="PTHR11034">
    <property type="entry name" value="N-MYC DOWNSTREAM REGULATED"/>
    <property type="match status" value="1"/>
</dbReference>
<dbReference type="Pfam" id="PF03096">
    <property type="entry name" value="Ndr"/>
    <property type="match status" value="1"/>
</dbReference>
<dbReference type="SUPFAM" id="SSF53474">
    <property type="entry name" value="alpha/beta-Hydrolases"/>
    <property type="match status" value="1"/>
</dbReference>